<accession>Q8VGQ7</accession>
<accession>E9QKY8</accession>
<accession>Q05A60</accession>
<accession>Q7TS47</accession>
<organism>
    <name type="scientific">Mus musculus</name>
    <name type="common">Mouse</name>
    <dbReference type="NCBI Taxonomy" id="10090"/>
    <lineage>
        <taxon>Eukaryota</taxon>
        <taxon>Metazoa</taxon>
        <taxon>Chordata</taxon>
        <taxon>Craniata</taxon>
        <taxon>Vertebrata</taxon>
        <taxon>Euteleostomi</taxon>
        <taxon>Mammalia</taxon>
        <taxon>Eutheria</taxon>
        <taxon>Euarchontoglires</taxon>
        <taxon>Glires</taxon>
        <taxon>Rodentia</taxon>
        <taxon>Myomorpha</taxon>
        <taxon>Muroidea</taxon>
        <taxon>Muridae</taxon>
        <taxon>Murinae</taxon>
        <taxon>Mus</taxon>
        <taxon>Mus</taxon>
    </lineage>
</organism>
<evidence type="ECO:0000255" key="1"/>
<evidence type="ECO:0000255" key="2">
    <source>
        <dbReference type="PROSITE-ProRule" id="PRU00521"/>
    </source>
</evidence>
<evidence type="ECO:0000305" key="3"/>
<evidence type="ECO:0000312" key="4">
    <source>
        <dbReference type="MGI" id="MGI:3030015"/>
    </source>
</evidence>
<reference key="1">
    <citation type="journal article" date="2002" name="Nat. Neurosci.">
        <title>The olfactory receptor gene superfamily of the mouse.</title>
        <authorList>
            <person name="Zhang X."/>
            <person name="Firestein S."/>
        </authorList>
    </citation>
    <scope>NUCLEOTIDE SEQUENCE [GENOMIC DNA]</scope>
</reference>
<reference key="2">
    <citation type="journal article" date="2002" name="Hum. Mol. Genet.">
        <title>Different evolutionary processes shaped the mouse and human olfactory receptor gene families.</title>
        <authorList>
            <person name="Young J.M."/>
            <person name="Friedman C."/>
            <person name="Williams E.M."/>
            <person name="Ross J.A."/>
            <person name="Tonnes-Priddy L."/>
            <person name="Trask B.J."/>
        </authorList>
    </citation>
    <scope>NUCLEOTIDE SEQUENCE [GENOMIC DNA]</scope>
</reference>
<reference key="3">
    <citation type="journal article" date="2002" name="Hum. Mol. Genet.">
        <authorList>
            <person name="Young J.M."/>
            <person name="Friedman C."/>
            <person name="Williams E.M."/>
            <person name="Ross J.A."/>
            <person name="Tonnes-Priddy L."/>
            <person name="Trask B.J."/>
        </authorList>
    </citation>
    <scope>ERRATUM OF PUBMED:11875048</scope>
</reference>
<reference key="4">
    <citation type="journal article" date="2009" name="PLoS Biol.">
        <title>Lineage-specific biology revealed by a finished genome assembly of the mouse.</title>
        <authorList>
            <person name="Church D.M."/>
            <person name="Goodstadt L."/>
            <person name="Hillier L.W."/>
            <person name="Zody M.C."/>
            <person name="Goldstein S."/>
            <person name="She X."/>
            <person name="Bult C.J."/>
            <person name="Agarwala R."/>
            <person name="Cherry J.L."/>
            <person name="DiCuccio M."/>
            <person name="Hlavina W."/>
            <person name="Kapustin Y."/>
            <person name="Meric P."/>
            <person name="Maglott D."/>
            <person name="Birtle Z."/>
            <person name="Marques A.C."/>
            <person name="Graves T."/>
            <person name="Zhou S."/>
            <person name="Teague B."/>
            <person name="Potamousis K."/>
            <person name="Churas C."/>
            <person name="Place M."/>
            <person name="Herschleb J."/>
            <person name="Runnheim R."/>
            <person name="Forrest D."/>
            <person name="Amos-Landgraf J."/>
            <person name="Schwartz D.C."/>
            <person name="Cheng Z."/>
            <person name="Lindblad-Toh K."/>
            <person name="Eichler E.E."/>
            <person name="Ponting C.P."/>
        </authorList>
    </citation>
    <scope>NUCLEOTIDE SEQUENCE [LARGE SCALE GENOMIC DNA]</scope>
    <source>
        <strain>C57BL/6J</strain>
    </source>
</reference>
<reference key="5">
    <citation type="journal article" date="2004" name="Genome Res.">
        <title>The status, quality, and expansion of the NIH full-length cDNA project: the Mammalian Gene Collection (MGC).</title>
        <authorList>
            <consortium name="The MGC Project Team"/>
        </authorList>
    </citation>
    <scope>NUCLEOTIDE SEQUENCE [LARGE SCALE MRNA]</scope>
    <source>
        <tissue>Brain</tissue>
    </source>
</reference>
<gene>
    <name evidence="4" type="primary">Or5k17</name>
    <name evidence="4" type="synonym">Mor184-4</name>
    <name evidence="4" type="synonym">Olfr181</name>
</gene>
<protein>
    <recommendedName>
        <fullName evidence="3">Olfactory receptor 5K17</fullName>
    </recommendedName>
    <alternativeName>
        <fullName>Olfactory receptor 181</fullName>
    </alternativeName>
    <alternativeName>
        <fullName>Olfactory receptor 184-4</fullName>
    </alternativeName>
</protein>
<keyword id="KW-1003">Cell membrane</keyword>
<keyword id="KW-1015">Disulfide bond</keyword>
<keyword id="KW-0297">G-protein coupled receptor</keyword>
<keyword id="KW-0325">Glycoprotein</keyword>
<keyword id="KW-0472">Membrane</keyword>
<keyword id="KW-0552">Olfaction</keyword>
<keyword id="KW-0675">Receptor</keyword>
<keyword id="KW-1185">Reference proteome</keyword>
<keyword id="KW-0716">Sensory transduction</keyword>
<keyword id="KW-0807">Transducer</keyword>
<keyword id="KW-0812">Transmembrane</keyword>
<keyword id="KW-1133">Transmembrane helix</keyword>
<comment type="function">
    <text>Potential odorant receptor.</text>
</comment>
<comment type="subcellular location">
    <subcellularLocation>
        <location evidence="3">Cell membrane</location>
        <topology evidence="1">Multi-pass membrane protein</topology>
    </subcellularLocation>
</comment>
<comment type="similarity">
    <text evidence="2">Belongs to the G-protein coupled receptor 1 family.</text>
</comment>
<comment type="sequence caution" evidence="3">
    <conflict type="erroneous initiation">
        <sequence resource="EMBL-CDS" id="AAP70774"/>
    </conflict>
</comment>
<sequence length="317" mass="36049">MMKANHSLTVEFILIGFSDHTDLKTLLFLLFSAIYLVTIVGNLGLVALIYMEPRLHTPMYIFLGNLALMDSCCSCAITPKMLENFFSVDRRISLYECMVQFYFLCLAETADCFLLAAMAYDRYVAICNPLQYHTMMSKKLSIQMSIGTFIASNLHSLIHTGCLLRLNFCKSRRIDHFFCDILPLYKLSCTDPFINELMLYIFSMPIQVFTITTVLVSYSCILLTVFKMKSKDGRGKAFSTCASHFFSVSIFYICLLMYIGPSKNSNKDIPVGVFYTIVIPLLNPFIYSLRNKEVVNAVKKVMKTHSIFKNSSASIAH</sequence>
<name>O5K17_MOUSE</name>
<proteinExistence type="evidence at transcript level"/>
<dbReference type="EMBL" id="AY073089">
    <property type="protein sequence ID" value="AAL60752.1"/>
    <property type="molecule type" value="Genomic_DNA"/>
</dbReference>
<dbReference type="EMBL" id="AY317266">
    <property type="protein sequence ID" value="AAP70774.1"/>
    <property type="status" value="ALT_INIT"/>
    <property type="molecule type" value="Genomic_DNA"/>
</dbReference>
<dbReference type="EMBL" id="AC154545">
    <property type="status" value="NOT_ANNOTATED_CDS"/>
    <property type="molecule type" value="Genomic_DNA"/>
</dbReference>
<dbReference type="EMBL" id="BC125397">
    <property type="protein sequence ID" value="AAI25398.1"/>
    <property type="molecule type" value="mRNA"/>
</dbReference>
<dbReference type="CCDS" id="CCDS28240.1"/>
<dbReference type="RefSeq" id="NP_667210.2">
    <property type="nucleotide sequence ID" value="NM_146999.2"/>
</dbReference>
<dbReference type="SMR" id="Q8VGQ7"/>
<dbReference type="FunCoup" id="Q8VGQ7">
    <property type="interactions" value="1203"/>
</dbReference>
<dbReference type="STRING" id="10090.ENSMUSP00000145877"/>
<dbReference type="GlyCosmos" id="Q8VGQ7">
    <property type="glycosylation" value="1 site, No reported glycans"/>
</dbReference>
<dbReference type="GlyGen" id="Q8VGQ7">
    <property type="glycosylation" value="1 site"/>
</dbReference>
<dbReference type="PaxDb" id="10090-ENSMUSP00000074825"/>
<dbReference type="DNASU" id="259001"/>
<dbReference type="Ensembl" id="ENSMUST00000075361.5">
    <property type="protein sequence ID" value="ENSMUSP00000074825.4"/>
    <property type="gene ID" value="ENSMUSG00000090951.5"/>
</dbReference>
<dbReference type="Ensembl" id="ENSMUST00000205742.2">
    <property type="protein sequence ID" value="ENSMUSP00000145806.2"/>
    <property type="gene ID" value="ENSMUSG00000090951.5"/>
</dbReference>
<dbReference type="Ensembl" id="ENSMUST00000205986.4">
    <property type="protein sequence ID" value="ENSMUSP00000145877.3"/>
    <property type="gene ID" value="ENSMUSG00000090951.5"/>
</dbReference>
<dbReference type="GeneID" id="259001"/>
<dbReference type="KEGG" id="mmu:259001"/>
<dbReference type="UCSC" id="uc007zok.2">
    <property type="organism name" value="mouse"/>
</dbReference>
<dbReference type="AGR" id="MGI:3030015"/>
<dbReference type="CTD" id="259001"/>
<dbReference type="MGI" id="MGI:3030015">
    <property type="gene designation" value="Or5k17"/>
</dbReference>
<dbReference type="VEuPathDB" id="HostDB:ENSMUSG00000090951"/>
<dbReference type="eggNOG" id="KOG3656">
    <property type="taxonomic scope" value="Eukaryota"/>
</dbReference>
<dbReference type="GeneTree" id="ENSGT01120000271834"/>
<dbReference type="HOGENOM" id="CLU_012526_5_5_1"/>
<dbReference type="InParanoid" id="Q8VGQ7"/>
<dbReference type="OMA" id="PYINEWI"/>
<dbReference type="OrthoDB" id="9444602at2759"/>
<dbReference type="PhylomeDB" id="Q8VGQ7"/>
<dbReference type="TreeFam" id="TF352737"/>
<dbReference type="BioGRID-ORCS" id="259001">
    <property type="hits" value="1 hit in 68 CRISPR screens"/>
</dbReference>
<dbReference type="PRO" id="PR:Q8VGQ7"/>
<dbReference type="Proteomes" id="UP000000589">
    <property type="component" value="Chromosome 16"/>
</dbReference>
<dbReference type="RNAct" id="Q8VGQ7">
    <property type="molecule type" value="protein"/>
</dbReference>
<dbReference type="Bgee" id="ENSMUSG00000090951">
    <property type="expression patterns" value="Expressed in spermatid and 1 other cell type or tissue"/>
</dbReference>
<dbReference type="ExpressionAtlas" id="Q8VGQ7">
    <property type="expression patterns" value="baseline and differential"/>
</dbReference>
<dbReference type="GO" id="GO:0016020">
    <property type="term" value="C:membrane"/>
    <property type="evidence" value="ECO:0000247"/>
    <property type="project" value="MGI"/>
</dbReference>
<dbReference type="GO" id="GO:0005886">
    <property type="term" value="C:plasma membrane"/>
    <property type="evidence" value="ECO:0007669"/>
    <property type="project" value="UniProtKB-SubCell"/>
</dbReference>
<dbReference type="GO" id="GO:0004930">
    <property type="term" value="F:G protein-coupled receptor activity"/>
    <property type="evidence" value="ECO:0007669"/>
    <property type="project" value="UniProtKB-KW"/>
</dbReference>
<dbReference type="GO" id="GO:0004984">
    <property type="term" value="F:olfactory receptor activity"/>
    <property type="evidence" value="ECO:0000247"/>
    <property type="project" value="MGI"/>
</dbReference>
<dbReference type="GO" id="GO:0007186">
    <property type="term" value="P:G protein-coupled receptor signaling pathway"/>
    <property type="evidence" value="ECO:0000247"/>
    <property type="project" value="MGI"/>
</dbReference>
<dbReference type="GO" id="GO:0007608">
    <property type="term" value="P:sensory perception of smell"/>
    <property type="evidence" value="ECO:0000247"/>
    <property type="project" value="MGI"/>
</dbReference>
<dbReference type="FunFam" id="1.20.1070.10:FF:000004">
    <property type="entry name" value="Olfactory receptor"/>
    <property type="match status" value="1"/>
</dbReference>
<dbReference type="Gene3D" id="1.20.1070.10">
    <property type="entry name" value="Rhodopsin 7-helix transmembrane proteins"/>
    <property type="match status" value="1"/>
</dbReference>
<dbReference type="InterPro" id="IPR000276">
    <property type="entry name" value="GPCR_Rhodpsn"/>
</dbReference>
<dbReference type="InterPro" id="IPR017452">
    <property type="entry name" value="GPCR_Rhodpsn_7TM"/>
</dbReference>
<dbReference type="InterPro" id="IPR000725">
    <property type="entry name" value="Olfact_rcpt"/>
</dbReference>
<dbReference type="InterPro" id="IPR050516">
    <property type="entry name" value="Olfactory_GPCR"/>
</dbReference>
<dbReference type="PANTHER" id="PTHR26452">
    <property type="entry name" value="OLFACTORY RECEPTOR"/>
    <property type="match status" value="1"/>
</dbReference>
<dbReference type="Pfam" id="PF13853">
    <property type="entry name" value="7tm_4"/>
    <property type="match status" value="1"/>
</dbReference>
<dbReference type="PRINTS" id="PR00237">
    <property type="entry name" value="GPCRRHODOPSN"/>
</dbReference>
<dbReference type="PRINTS" id="PR00245">
    <property type="entry name" value="OLFACTORYR"/>
</dbReference>
<dbReference type="SUPFAM" id="SSF81321">
    <property type="entry name" value="Family A G protein-coupled receptor-like"/>
    <property type="match status" value="1"/>
</dbReference>
<dbReference type="PROSITE" id="PS00237">
    <property type="entry name" value="G_PROTEIN_RECEP_F1_1"/>
    <property type="match status" value="1"/>
</dbReference>
<dbReference type="PROSITE" id="PS50262">
    <property type="entry name" value="G_PROTEIN_RECEP_F1_2"/>
    <property type="match status" value="1"/>
</dbReference>
<feature type="chain" id="PRO_0000269656" description="Olfactory receptor 5K17">
    <location>
        <begin position="1"/>
        <end position="317"/>
    </location>
</feature>
<feature type="topological domain" description="Extracellular" evidence="1">
    <location>
        <begin position="1"/>
        <end position="28"/>
    </location>
</feature>
<feature type="transmembrane region" description="Helical; Name=1" evidence="1">
    <location>
        <begin position="29"/>
        <end position="49"/>
    </location>
</feature>
<feature type="topological domain" description="Cytoplasmic" evidence="1">
    <location>
        <begin position="50"/>
        <end position="56"/>
    </location>
</feature>
<feature type="transmembrane region" description="Helical; Name=2" evidence="1">
    <location>
        <begin position="57"/>
        <end position="77"/>
    </location>
</feature>
<feature type="topological domain" description="Extracellular" evidence="1">
    <location>
        <begin position="78"/>
        <end position="93"/>
    </location>
</feature>
<feature type="transmembrane region" description="Helical; Name=3" evidence="1">
    <location>
        <begin position="94"/>
        <end position="114"/>
    </location>
</feature>
<feature type="topological domain" description="Cytoplasmic" evidence="1">
    <location>
        <begin position="115"/>
        <end position="144"/>
    </location>
</feature>
<feature type="transmembrane region" description="Helical; Name=4" evidence="1">
    <location>
        <begin position="145"/>
        <end position="165"/>
    </location>
</feature>
<feature type="topological domain" description="Extracellular" evidence="1">
    <location>
        <begin position="166"/>
        <end position="198"/>
    </location>
</feature>
<feature type="transmembrane region" description="Helical; Name=5" evidence="1">
    <location>
        <begin position="199"/>
        <end position="219"/>
    </location>
</feature>
<feature type="topological domain" description="Cytoplasmic" evidence="1">
    <location>
        <begin position="220"/>
        <end position="239"/>
    </location>
</feature>
<feature type="transmembrane region" description="Helical; Name=6" evidence="1">
    <location>
        <begin position="240"/>
        <end position="259"/>
    </location>
</feature>
<feature type="topological domain" description="Extracellular" evidence="1">
    <location>
        <begin position="260"/>
        <end position="268"/>
    </location>
</feature>
<feature type="transmembrane region" description="Helical; Name=7" evidence="1">
    <location>
        <begin position="269"/>
        <end position="289"/>
    </location>
</feature>
<feature type="topological domain" description="Cytoplasmic" evidence="1">
    <location>
        <begin position="290"/>
        <end position="317"/>
    </location>
</feature>
<feature type="glycosylation site" description="N-linked (GlcNAc...) asparagine" evidence="1">
    <location>
        <position position="5"/>
    </location>
</feature>
<feature type="disulfide bond" evidence="2">
    <location>
        <begin position="97"/>
        <end position="189"/>
    </location>
</feature>
<feature type="sequence conflict" description="In Ref. 1; AAL60752 and 2; AAP70774." evidence="3" ref="1 2">
    <original>T</original>
    <variation>S</variation>
    <location>
        <position position="134"/>
    </location>
</feature>
<feature type="sequence conflict" description="In Ref. 1; AAL60752, 2; AAP70774 and 5; AAI25398." evidence="3" ref="1 2 5">
    <original>A</original>
    <variation>T</variation>
    <location>
        <position position="237"/>
    </location>
</feature>
<feature type="sequence conflict" description="In Ref. 1; AAL60752." evidence="3" ref="1">
    <original>G</original>
    <variation>D</variation>
    <location>
        <position position="272"/>
    </location>
</feature>